<evidence type="ECO:0000255" key="1">
    <source>
        <dbReference type="HAMAP-Rule" id="MF_00523"/>
    </source>
</evidence>
<comment type="function">
    <text evidence="1">Catalyzes the N-acylation of UDP-3-O-acylglucosamine using 3-hydroxyacyl-ACP as the acyl donor. Is involved in the biosynthesis of lipid A, a phosphorylated glycolipid that anchors the lipopolysaccharide to the outer membrane of the cell.</text>
</comment>
<comment type="catalytic activity">
    <reaction evidence="1">
        <text>a UDP-3-O-[(3R)-3-hydroxyacyl]-alpha-D-glucosamine + a (3R)-hydroxyacyl-[ACP] = a UDP-2-N,3-O-bis[(3R)-3-hydroxyacyl]-alpha-D-glucosamine + holo-[ACP] + H(+)</text>
        <dbReference type="Rhea" id="RHEA:53836"/>
        <dbReference type="Rhea" id="RHEA-COMP:9685"/>
        <dbReference type="Rhea" id="RHEA-COMP:9945"/>
        <dbReference type="ChEBI" id="CHEBI:15378"/>
        <dbReference type="ChEBI" id="CHEBI:64479"/>
        <dbReference type="ChEBI" id="CHEBI:78827"/>
        <dbReference type="ChEBI" id="CHEBI:137740"/>
        <dbReference type="ChEBI" id="CHEBI:137748"/>
        <dbReference type="EC" id="2.3.1.191"/>
    </reaction>
</comment>
<comment type="pathway">
    <text evidence="1">Bacterial outer membrane biogenesis; LPS lipid A biosynthesis.</text>
</comment>
<comment type="subunit">
    <text evidence="1">Homotrimer.</text>
</comment>
<comment type="similarity">
    <text evidence="1">Belongs to the transferase hexapeptide repeat family. LpxD subfamily.</text>
</comment>
<gene>
    <name evidence="1" type="primary">lpxD</name>
    <name type="ordered locus">FN1909</name>
</gene>
<name>LPXD_FUSNN</name>
<keyword id="KW-0012">Acyltransferase</keyword>
<keyword id="KW-0441">Lipid A biosynthesis</keyword>
<keyword id="KW-0444">Lipid biosynthesis</keyword>
<keyword id="KW-0443">Lipid metabolism</keyword>
<keyword id="KW-1185">Reference proteome</keyword>
<keyword id="KW-0677">Repeat</keyword>
<keyword id="KW-0808">Transferase</keyword>
<protein>
    <recommendedName>
        <fullName evidence="1">UDP-3-O-acylglucosamine N-acyltransferase</fullName>
        <ecNumber evidence="1">2.3.1.191</ecNumber>
    </recommendedName>
</protein>
<dbReference type="EC" id="2.3.1.191" evidence="1"/>
<dbReference type="EMBL" id="AE009951">
    <property type="protein sequence ID" value="AAL94008.1"/>
    <property type="molecule type" value="Genomic_DNA"/>
</dbReference>
<dbReference type="RefSeq" id="NP_602709.1">
    <property type="nucleotide sequence ID" value="NC_003454.1"/>
</dbReference>
<dbReference type="RefSeq" id="WP_005903952.1">
    <property type="nucleotide sequence ID" value="NZ_OZ209243.1"/>
</dbReference>
<dbReference type="SMR" id="Q8R6D9"/>
<dbReference type="STRING" id="190304.FN1909"/>
<dbReference type="PaxDb" id="190304-FN1909"/>
<dbReference type="EnsemblBacteria" id="AAL94008">
    <property type="protein sequence ID" value="AAL94008"/>
    <property type="gene ID" value="FN1909"/>
</dbReference>
<dbReference type="GeneID" id="79783074"/>
<dbReference type="KEGG" id="fnu:FN1909"/>
<dbReference type="PATRIC" id="fig|190304.8.peg.384"/>
<dbReference type="eggNOG" id="COG1044">
    <property type="taxonomic scope" value="Bacteria"/>
</dbReference>
<dbReference type="HOGENOM" id="CLU_049865_0_0_0"/>
<dbReference type="InParanoid" id="Q8R6D9"/>
<dbReference type="BioCyc" id="FNUC190304:G1FZS-403-MONOMER"/>
<dbReference type="UniPathway" id="UPA00973"/>
<dbReference type="Proteomes" id="UP000002521">
    <property type="component" value="Chromosome"/>
</dbReference>
<dbReference type="GO" id="GO:0016020">
    <property type="term" value="C:membrane"/>
    <property type="evidence" value="ECO:0007669"/>
    <property type="project" value="GOC"/>
</dbReference>
<dbReference type="GO" id="GO:0016410">
    <property type="term" value="F:N-acyltransferase activity"/>
    <property type="evidence" value="ECO:0007669"/>
    <property type="project" value="InterPro"/>
</dbReference>
<dbReference type="GO" id="GO:0009245">
    <property type="term" value="P:lipid A biosynthetic process"/>
    <property type="evidence" value="ECO:0007669"/>
    <property type="project" value="UniProtKB-UniRule"/>
</dbReference>
<dbReference type="CDD" id="cd03352">
    <property type="entry name" value="LbH_LpxD"/>
    <property type="match status" value="1"/>
</dbReference>
<dbReference type="Gene3D" id="2.160.10.10">
    <property type="entry name" value="Hexapeptide repeat proteins"/>
    <property type="match status" value="1"/>
</dbReference>
<dbReference type="Gene3D" id="3.40.1390.10">
    <property type="entry name" value="MurE/MurF, N-terminal domain"/>
    <property type="match status" value="1"/>
</dbReference>
<dbReference type="HAMAP" id="MF_00523">
    <property type="entry name" value="LpxD"/>
    <property type="match status" value="1"/>
</dbReference>
<dbReference type="InterPro" id="IPR001451">
    <property type="entry name" value="Hexapep"/>
</dbReference>
<dbReference type="InterPro" id="IPR018357">
    <property type="entry name" value="Hexapep_transf_CS"/>
</dbReference>
<dbReference type="InterPro" id="IPR007691">
    <property type="entry name" value="LpxD"/>
</dbReference>
<dbReference type="InterPro" id="IPR011004">
    <property type="entry name" value="Trimer_LpxA-like_sf"/>
</dbReference>
<dbReference type="InterPro" id="IPR020573">
    <property type="entry name" value="UDP_GlcNAc_AcTrfase_non-rep"/>
</dbReference>
<dbReference type="NCBIfam" id="TIGR01853">
    <property type="entry name" value="lipid_A_lpxD"/>
    <property type="match status" value="1"/>
</dbReference>
<dbReference type="NCBIfam" id="NF002060">
    <property type="entry name" value="PRK00892.1"/>
    <property type="match status" value="1"/>
</dbReference>
<dbReference type="PANTHER" id="PTHR43378">
    <property type="entry name" value="UDP-3-O-ACYLGLUCOSAMINE N-ACYLTRANSFERASE"/>
    <property type="match status" value="1"/>
</dbReference>
<dbReference type="PANTHER" id="PTHR43378:SF2">
    <property type="entry name" value="UDP-3-O-ACYLGLUCOSAMINE N-ACYLTRANSFERASE 1, MITOCHONDRIAL-RELATED"/>
    <property type="match status" value="1"/>
</dbReference>
<dbReference type="Pfam" id="PF00132">
    <property type="entry name" value="Hexapep"/>
    <property type="match status" value="2"/>
</dbReference>
<dbReference type="Pfam" id="PF14602">
    <property type="entry name" value="Hexapep_2"/>
    <property type="match status" value="2"/>
</dbReference>
<dbReference type="Pfam" id="PF04613">
    <property type="entry name" value="LpxD"/>
    <property type="match status" value="1"/>
</dbReference>
<dbReference type="SUPFAM" id="SSF51161">
    <property type="entry name" value="Trimeric LpxA-like enzymes"/>
    <property type="match status" value="1"/>
</dbReference>
<dbReference type="PROSITE" id="PS00101">
    <property type="entry name" value="HEXAPEP_TRANSFERASES"/>
    <property type="match status" value="3"/>
</dbReference>
<accession>Q8R6D9</accession>
<proteinExistence type="inferred from homology"/>
<sequence length="332" mass="36064">MEYRVTDIITLLNAEYKGEVVEKVSKLSPFFHSDEKSLTFAADEKFLKNLSQTKAKVIIVPDIDLPLIEGKGYIVVKDSPRVIMPKLLHFFSRNLKKIEKMREDSAKIGENVDIAPNVYIGHDVVIGNNVKIFPNVTIGEGSIIGDGTVIYSNVSIREFVEIGKNCVIQPGAVIGSDGFGFVKVNGNNTKIDQIGTVIVEDEVEIGANTTIDRGAIGDTIIKKYTKIDNLVQIAHNDIIGENCLIISQVGIAGSTTIGNNVTLAGQVGVAGHLEIGDNTMIGAQSGVPGNVEANKILSGHPLVDHREDMKIRVAMKKLPELLKRVKALEEKK</sequence>
<reference key="1">
    <citation type="journal article" date="2002" name="J. Bacteriol.">
        <title>Genome sequence and analysis of the oral bacterium Fusobacterium nucleatum strain ATCC 25586.</title>
        <authorList>
            <person name="Kapatral V."/>
            <person name="Anderson I."/>
            <person name="Ivanova N."/>
            <person name="Reznik G."/>
            <person name="Los T."/>
            <person name="Lykidis A."/>
            <person name="Bhattacharyya A."/>
            <person name="Bartman A."/>
            <person name="Gardner W."/>
            <person name="Grechkin G."/>
            <person name="Zhu L."/>
            <person name="Vasieva O."/>
            <person name="Chu L."/>
            <person name="Kogan Y."/>
            <person name="Chaga O."/>
            <person name="Goltsman E."/>
            <person name="Bernal A."/>
            <person name="Larsen N."/>
            <person name="D'Souza M."/>
            <person name="Walunas T."/>
            <person name="Pusch G."/>
            <person name="Haselkorn R."/>
            <person name="Fonstein M."/>
            <person name="Kyrpides N.C."/>
            <person name="Overbeek R."/>
        </authorList>
    </citation>
    <scope>NUCLEOTIDE SEQUENCE [LARGE SCALE GENOMIC DNA]</scope>
    <source>
        <strain>ATCC 25586 / DSM 15643 / BCRC 10681 / CIP 101130 / JCM 8532 / KCTC 2640 / LMG 13131 / VPI 4355</strain>
    </source>
</reference>
<organism>
    <name type="scientific">Fusobacterium nucleatum subsp. nucleatum (strain ATCC 25586 / DSM 15643 / BCRC 10681 / CIP 101130 / JCM 8532 / KCTC 2640 / LMG 13131 / VPI 4355)</name>
    <dbReference type="NCBI Taxonomy" id="190304"/>
    <lineage>
        <taxon>Bacteria</taxon>
        <taxon>Fusobacteriati</taxon>
        <taxon>Fusobacteriota</taxon>
        <taxon>Fusobacteriia</taxon>
        <taxon>Fusobacteriales</taxon>
        <taxon>Fusobacteriaceae</taxon>
        <taxon>Fusobacterium</taxon>
    </lineage>
</organism>
<feature type="chain" id="PRO_0000264376" description="UDP-3-O-acylglucosamine N-acyltransferase">
    <location>
        <begin position="1"/>
        <end position="332"/>
    </location>
</feature>
<feature type="active site" description="Proton acceptor" evidence="1">
    <location>
        <position position="235"/>
    </location>
</feature>